<organism>
    <name type="scientific">Caenorhabditis elegans</name>
    <dbReference type="NCBI Taxonomy" id="6239"/>
    <lineage>
        <taxon>Eukaryota</taxon>
        <taxon>Metazoa</taxon>
        <taxon>Ecdysozoa</taxon>
        <taxon>Nematoda</taxon>
        <taxon>Chromadorea</taxon>
        <taxon>Rhabditida</taxon>
        <taxon>Rhabditina</taxon>
        <taxon>Rhabditomorpha</taxon>
        <taxon>Rhabditoidea</taxon>
        <taxon>Rhabditidae</taxon>
        <taxon>Peloderinae</taxon>
        <taxon>Caenorhabditis</taxon>
    </lineage>
</organism>
<protein>
    <recommendedName>
        <fullName>Putative uncharacterized protein F40H6.5</fullName>
    </recommendedName>
</protein>
<proteinExistence type="inferred from homology"/>
<sequence length="1229" mass="135070">MKYFLLLFLLVLSFTLVESVYQYQILILEPIYRFTDSAAVPAKSIYFTNLPQHFSLTQKSSKLDLSQFNVVRGFTQEMFLKNLGCGTDTCQNFPATVTSVYNIIDLKGRLKFETNPAGTDNVLGKAGYLATEEIEGLVRYDEYYSEEDDSFTYTNGKYPNQFGACQLRDYGKLRYKFVRTLGHAFTAVAIPENLPIYSIFAYDDGLPEPTTTVSPTLSPTQYVFETNPIWKILKNSKNGTQGVGAVNLPWTPPVSASPIEPTNVCLLNGNSSVLSRYGEIDRMLQFFDDTHVIIGFKDSIQDASNTFIYSYIGYAFKSSDNLCGIPLKPIRELYKAGVGNTVVAGDDYSDLISSGYMLTGNIIGYTIDCNSTTDGELIVMIPDGISTISSTTILLTSQFATSSPSQIVGYYVQPVKIVGPSASGGEQGYWVDPELPEPQIGDVLGISNVCLFTASSSIISKCGYTRNIYVYYDNVDKFYFVSLYTFGRSVTSKVIGIAFETEENSCGLNLVPIRELYKDRYYVVAGNDYQYLIDDGYNITGNIVGYTVDCKDSKDEFVYGHLPSYAFSTTTSSMTTTASDSTTSDSSVIVSSSKNPAVSNPFITTYSLPSSPNNPFISITTTPDSASSQKISTTTAISHSAYSASPSTIPTTTPYDLTKPLPKLDCNIIENYGDLNGRMVNFANVMEVGDNITITGHIWQNASESTFNLYVGMDPKYLQSYISIHINMRWATDGIVYNYFWGMWNYQFESYSTRPFSRGLPYVLSVVRGINYYDVYGNGQFIKKFGIIGSVALHQVGAMYGYQQWNIDTVKMNCARSHTTTVEPSTPLETASTSQSTPSATLTSTTENIPSTSKIPETSTTQRPTSPILTSGATSTSSSTESTTTSPTTSTTTTLPPTTTPYNLSAPIPKLDCNTIQFYGNLLWRPVVFSRYMEVGDNITLTGFIWNNATESNVNFYLGFNPLFGTTAVPVHISQRWSSSARIIYNNFWGQWGPEAFSARPFTRGQPFVISLIKTANSHQIYGNGQLLINFGYRGTASQNLIGSMIAYRESTIDTVSMACVRPPTTPTTTTSTTTTTTPKLTTTSTLPSTSTAIATTDVSTRPRSCDINSITLGEGDANTPQLQLDAVLGESSGSSLSIYCRGLPNYSIYMMFNVNQGGPPPVIDGYLEITLDCLPDSEGVWTFGGREITAISCFQAPKCSTFVPSFWRSVDLPILSPTSRVVMLLTWQ</sequence>
<dbReference type="EMBL" id="BX284603">
    <property type="protein sequence ID" value="CCD63188.2"/>
    <property type="molecule type" value="Genomic_DNA"/>
</dbReference>
<dbReference type="PIR" id="F88473">
    <property type="entry name" value="F88473"/>
</dbReference>
<dbReference type="RefSeq" id="NP_001367438.1">
    <property type="nucleotide sequence ID" value="NM_001379740.1"/>
</dbReference>
<dbReference type="RefSeq" id="NP_498318.2">
    <property type="nucleotide sequence ID" value="NM_065917.2"/>
</dbReference>
<dbReference type="SMR" id="Q09277"/>
<dbReference type="FunCoup" id="Q09277">
    <property type="interactions" value="812"/>
</dbReference>
<dbReference type="PaxDb" id="6239-F40H6.5"/>
<dbReference type="EnsemblMetazoa" id="F40H6.5.1">
    <property type="protein sequence ID" value="F40H6.5.1"/>
    <property type="gene ID" value="WBGene00018255"/>
</dbReference>
<dbReference type="GeneID" id="185576"/>
<dbReference type="UCSC" id="F40H6.5">
    <property type="organism name" value="c. elegans"/>
</dbReference>
<dbReference type="AGR" id="WB:WBGene00018255"/>
<dbReference type="WormBase" id="F40H6.5">
    <property type="protein sequence ID" value="CE54168"/>
    <property type="gene ID" value="WBGene00018255"/>
</dbReference>
<dbReference type="eggNOG" id="ENOG502TGB4">
    <property type="taxonomic scope" value="Eukaryota"/>
</dbReference>
<dbReference type="GeneTree" id="ENSGT00970000196580"/>
<dbReference type="HOGENOM" id="CLU_262478_0_0_1"/>
<dbReference type="InParanoid" id="Q09277"/>
<dbReference type="OrthoDB" id="5829566at2759"/>
<dbReference type="PRO" id="PR:Q09277"/>
<dbReference type="Proteomes" id="UP000001940">
    <property type="component" value="Chromosome III"/>
</dbReference>
<dbReference type="Bgee" id="WBGene00018255">
    <property type="expression patterns" value="Expressed in larva and 1 other cell type or tissue"/>
</dbReference>
<dbReference type="GO" id="GO:0030246">
    <property type="term" value="F:carbohydrate binding"/>
    <property type="evidence" value="ECO:0000318"/>
    <property type="project" value="GO_Central"/>
</dbReference>
<dbReference type="CDD" id="cd00070">
    <property type="entry name" value="GLECT"/>
    <property type="match status" value="2"/>
</dbReference>
<dbReference type="FunFam" id="2.60.120.200:FF:000328">
    <property type="entry name" value="Protein CBG09099"/>
    <property type="match status" value="2"/>
</dbReference>
<dbReference type="Gene3D" id="2.60.120.200">
    <property type="match status" value="2"/>
</dbReference>
<dbReference type="InterPro" id="IPR002601">
    <property type="entry name" value="C6_domain"/>
</dbReference>
<dbReference type="InterPro" id="IPR013320">
    <property type="entry name" value="ConA-like_dom_sf"/>
</dbReference>
<dbReference type="InterPro" id="IPR044156">
    <property type="entry name" value="Galectin-like"/>
</dbReference>
<dbReference type="InterPro" id="IPR001079">
    <property type="entry name" value="Galectin_CRD"/>
</dbReference>
<dbReference type="PANTHER" id="PTHR11346">
    <property type="entry name" value="GALECTIN"/>
    <property type="match status" value="1"/>
</dbReference>
<dbReference type="PANTHER" id="PTHR11346:SF88">
    <property type="entry name" value="GALECTIN"/>
    <property type="match status" value="1"/>
</dbReference>
<dbReference type="Pfam" id="PF00337">
    <property type="entry name" value="Gal-bind_lectin"/>
    <property type="match status" value="2"/>
</dbReference>
<dbReference type="SMART" id="SM01048">
    <property type="entry name" value="C6"/>
    <property type="match status" value="1"/>
</dbReference>
<dbReference type="SMART" id="SM00908">
    <property type="entry name" value="Gal-bind_lectin"/>
    <property type="match status" value="2"/>
</dbReference>
<dbReference type="SMART" id="SM00276">
    <property type="entry name" value="GLECT"/>
    <property type="match status" value="1"/>
</dbReference>
<dbReference type="SUPFAM" id="SSF49899">
    <property type="entry name" value="Concanavalin A-like lectins/glucanases"/>
    <property type="match status" value="2"/>
</dbReference>
<dbReference type="PROSITE" id="PS51304">
    <property type="entry name" value="GALECTIN"/>
    <property type="match status" value="2"/>
</dbReference>
<keyword id="KW-0325">Glycoprotein</keyword>
<keyword id="KW-0430">Lectin</keyword>
<keyword id="KW-1185">Reference proteome</keyword>
<keyword id="KW-0677">Repeat</keyword>
<keyword id="KW-0732">Signal</keyword>
<reference key="1">
    <citation type="journal article" date="1998" name="Science">
        <title>Genome sequence of the nematode C. elegans: a platform for investigating biology.</title>
        <authorList>
            <consortium name="The C. elegans sequencing consortium"/>
        </authorList>
    </citation>
    <scope>NUCLEOTIDE SEQUENCE [LARGE SCALE GENOMIC DNA]</scope>
    <source>
        <strain>Bristol N2</strain>
    </source>
</reference>
<feature type="signal peptide" evidence="1">
    <location>
        <begin position="1"/>
        <end position="19"/>
    </location>
</feature>
<feature type="chain" id="PRO_0000065333" description="Putative uncharacterized protein F40H6.5">
    <location>
        <begin position="20"/>
        <end position="1229"/>
    </location>
</feature>
<feature type="domain" description="Galectin 1" evidence="3">
    <location>
        <begin position="678"/>
        <end position="813"/>
    </location>
</feature>
<feature type="domain" description="Galectin 2" evidence="3">
    <location>
        <begin position="925"/>
        <end position="1059"/>
    </location>
</feature>
<feature type="region of interest" description="Disordered" evidence="4">
    <location>
        <begin position="818"/>
        <end position="903"/>
    </location>
</feature>
<feature type="region of interest" description="Disordered" evidence="4">
    <location>
        <begin position="1061"/>
        <end position="1087"/>
    </location>
</feature>
<feature type="compositionally biased region" description="Polar residues" evidence="4">
    <location>
        <begin position="818"/>
        <end position="829"/>
    </location>
</feature>
<feature type="compositionally biased region" description="Low complexity" evidence="4">
    <location>
        <begin position="830"/>
        <end position="846"/>
    </location>
</feature>
<feature type="compositionally biased region" description="Polar residues" evidence="4">
    <location>
        <begin position="847"/>
        <end position="869"/>
    </location>
</feature>
<feature type="compositionally biased region" description="Low complexity" evidence="4">
    <location>
        <begin position="870"/>
        <end position="901"/>
    </location>
</feature>
<feature type="compositionally biased region" description="Low complexity" evidence="4">
    <location>
        <begin position="1067"/>
        <end position="1087"/>
    </location>
</feature>
<feature type="glycosylation site" description="N-linked (GlcNAc...) asparagine" evidence="2">
    <location>
        <position position="238"/>
    </location>
</feature>
<feature type="glycosylation site" description="N-linked (GlcNAc...) asparagine" evidence="2">
    <location>
        <position position="270"/>
    </location>
</feature>
<feature type="glycosylation site" description="N-linked (GlcNAc...) asparagine" evidence="2">
    <location>
        <position position="370"/>
    </location>
</feature>
<feature type="glycosylation site" description="N-linked (GlcNAc...) asparagine" evidence="2">
    <location>
        <position position="538"/>
    </location>
</feature>
<feature type="glycosylation site" description="N-linked (GlcNAc...) asparagine" evidence="2">
    <location>
        <position position="691"/>
    </location>
</feature>
<feature type="glycosylation site" description="N-linked (GlcNAc...) asparagine" evidence="2">
    <location>
        <position position="701"/>
    </location>
</feature>
<feature type="glycosylation site" description="N-linked (GlcNAc...) asparagine" evidence="2">
    <location>
        <position position="903"/>
    </location>
</feature>
<feature type="glycosylation site" description="N-linked (GlcNAc...) asparagine" evidence="2">
    <location>
        <position position="938"/>
    </location>
</feature>
<feature type="glycosylation site" description="N-linked (GlcNAc...) asparagine" evidence="2">
    <location>
        <position position="948"/>
    </location>
</feature>
<feature type="glycosylation site" description="N-linked (GlcNAc...) asparagine" evidence="2">
    <location>
        <position position="1146"/>
    </location>
</feature>
<gene>
    <name evidence="5" type="ORF">F40H6.5</name>
</gene>
<evidence type="ECO:0000255" key="1"/>
<evidence type="ECO:0000255" key="2">
    <source>
        <dbReference type="PROSITE-ProRule" id="PRU00498"/>
    </source>
</evidence>
<evidence type="ECO:0000255" key="3">
    <source>
        <dbReference type="PROSITE-ProRule" id="PRU00639"/>
    </source>
</evidence>
<evidence type="ECO:0000256" key="4">
    <source>
        <dbReference type="SAM" id="MobiDB-lite"/>
    </source>
</evidence>
<evidence type="ECO:0000312" key="5">
    <source>
        <dbReference type="WormBase" id="F40H6.5"/>
    </source>
</evidence>
<name>YPX5_CAEEL</name>
<accession>Q09277</accession>